<name>METE_BURMS</name>
<reference key="1">
    <citation type="journal article" date="2010" name="Genome Biol. Evol.">
        <title>Continuing evolution of Burkholderia mallei through genome reduction and large-scale rearrangements.</title>
        <authorList>
            <person name="Losada L."/>
            <person name="Ronning C.M."/>
            <person name="DeShazer D."/>
            <person name="Woods D."/>
            <person name="Fedorova N."/>
            <person name="Kim H.S."/>
            <person name="Shabalina S.A."/>
            <person name="Pearson T.R."/>
            <person name="Brinkac L."/>
            <person name="Tan P."/>
            <person name="Nandi T."/>
            <person name="Crabtree J."/>
            <person name="Badger J."/>
            <person name="Beckstrom-Sternberg S."/>
            <person name="Saqib M."/>
            <person name="Schutzer S.E."/>
            <person name="Keim P."/>
            <person name="Nierman W.C."/>
        </authorList>
    </citation>
    <scope>NUCLEOTIDE SEQUENCE [LARGE SCALE GENOMIC DNA]</scope>
    <source>
        <strain>SAVP1</strain>
    </source>
</reference>
<dbReference type="EC" id="2.1.1.14" evidence="1"/>
<dbReference type="EMBL" id="CP000526">
    <property type="protein sequence ID" value="ABM50785.1"/>
    <property type="molecule type" value="Genomic_DNA"/>
</dbReference>
<dbReference type="RefSeq" id="WP_004189599.1">
    <property type="nucleotide sequence ID" value="NC_008785.1"/>
</dbReference>
<dbReference type="SMR" id="A1V6R3"/>
<dbReference type="GeneID" id="92978235"/>
<dbReference type="KEGG" id="bmv:BMASAVP1_A2616"/>
<dbReference type="HOGENOM" id="CLU_013175_0_0_4"/>
<dbReference type="UniPathway" id="UPA00051">
    <property type="reaction ID" value="UER00082"/>
</dbReference>
<dbReference type="GO" id="GO:0003871">
    <property type="term" value="F:5-methyltetrahydropteroyltriglutamate-homocysteine S-methyltransferase activity"/>
    <property type="evidence" value="ECO:0007669"/>
    <property type="project" value="UniProtKB-UniRule"/>
</dbReference>
<dbReference type="GO" id="GO:0008270">
    <property type="term" value="F:zinc ion binding"/>
    <property type="evidence" value="ECO:0007669"/>
    <property type="project" value="InterPro"/>
</dbReference>
<dbReference type="GO" id="GO:0009086">
    <property type="term" value="P:methionine biosynthetic process"/>
    <property type="evidence" value="ECO:0007669"/>
    <property type="project" value="UniProtKB-UniRule"/>
</dbReference>
<dbReference type="GO" id="GO:0032259">
    <property type="term" value="P:methylation"/>
    <property type="evidence" value="ECO:0007669"/>
    <property type="project" value="UniProtKB-KW"/>
</dbReference>
<dbReference type="CDD" id="cd03311">
    <property type="entry name" value="CIMS_C_terminal_like"/>
    <property type="match status" value="1"/>
</dbReference>
<dbReference type="CDD" id="cd03312">
    <property type="entry name" value="CIMS_N_terminal_like"/>
    <property type="match status" value="1"/>
</dbReference>
<dbReference type="Gene3D" id="3.20.20.210">
    <property type="match status" value="2"/>
</dbReference>
<dbReference type="HAMAP" id="MF_00172">
    <property type="entry name" value="Meth_synth"/>
    <property type="match status" value="1"/>
</dbReference>
<dbReference type="InterPro" id="IPR013215">
    <property type="entry name" value="Cbl-indep_Met_Synth_N"/>
</dbReference>
<dbReference type="InterPro" id="IPR006276">
    <property type="entry name" value="Cobalamin-indep_Met_synthase"/>
</dbReference>
<dbReference type="InterPro" id="IPR002629">
    <property type="entry name" value="Met_Synth_C/arc"/>
</dbReference>
<dbReference type="InterPro" id="IPR038071">
    <property type="entry name" value="UROD/MetE-like_sf"/>
</dbReference>
<dbReference type="NCBIfam" id="TIGR01371">
    <property type="entry name" value="met_syn_B12ind"/>
    <property type="match status" value="1"/>
</dbReference>
<dbReference type="NCBIfam" id="NF003556">
    <property type="entry name" value="PRK05222.1"/>
    <property type="match status" value="1"/>
</dbReference>
<dbReference type="PANTHER" id="PTHR30519">
    <property type="entry name" value="5-METHYLTETRAHYDROPTEROYLTRIGLUTAMATE--HOMOCYSTEINE METHYLTRANSFERASE"/>
    <property type="match status" value="1"/>
</dbReference>
<dbReference type="Pfam" id="PF08267">
    <property type="entry name" value="Meth_synt_1"/>
    <property type="match status" value="1"/>
</dbReference>
<dbReference type="Pfam" id="PF01717">
    <property type="entry name" value="Meth_synt_2"/>
    <property type="match status" value="1"/>
</dbReference>
<dbReference type="PIRSF" id="PIRSF000382">
    <property type="entry name" value="MeTrfase_B12_ind"/>
    <property type="match status" value="1"/>
</dbReference>
<dbReference type="SUPFAM" id="SSF51726">
    <property type="entry name" value="UROD/MetE-like"/>
    <property type="match status" value="2"/>
</dbReference>
<feature type="chain" id="PRO_1000071603" description="5-methyltetrahydropteroyltriglutamate--homocysteine methyltransferase">
    <location>
        <begin position="1"/>
        <end position="764"/>
    </location>
</feature>
<feature type="active site" description="Proton donor" evidence="1">
    <location>
        <position position="698"/>
    </location>
</feature>
<feature type="binding site" evidence="1">
    <location>
        <begin position="16"/>
        <end position="19"/>
    </location>
    <ligand>
        <name>5-methyltetrahydropteroyltri-L-glutamate</name>
        <dbReference type="ChEBI" id="CHEBI:58207"/>
    </ligand>
</feature>
<feature type="binding site" evidence="1">
    <location>
        <position position="115"/>
    </location>
    <ligand>
        <name>5-methyltetrahydropteroyltri-L-glutamate</name>
        <dbReference type="ChEBI" id="CHEBI:58207"/>
    </ligand>
</feature>
<feature type="binding site" evidence="1">
    <location>
        <begin position="435"/>
        <end position="437"/>
    </location>
    <ligand>
        <name>L-homocysteine</name>
        <dbReference type="ChEBI" id="CHEBI:58199"/>
    </ligand>
</feature>
<feature type="binding site" evidence="1">
    <location>
        <begin position="435"/>
        <end position="437"/>
    </location>
    <ligand>
        <name>L-methionine</name>
        <dbReference type="ChEBI" id="CHEBI:57844"/>
    </ligand>
</feature>
<feature type="binding site" evidence="1">
    <location>
        <position position="488"/>
    </location>
    <ligand>
        <name>L-homocysteine</name>
        <dbReference type="ChEBI" id="CHEBI:58199"/>
    </ligand>
</feature>
<feature type="binding site" evidence="1">
    <location>
        <position position="488"/>
    </location>
    <ligand>
        <name>L-methionine</name>
        <dbReference type="ChEBI" id="CHEBI:57844"/>
    </ligand>
</feature>
<feature type="binding site" evidence="1">
    <location>
        <begin position="519"/>
        <end position="520"/>
    </location>
    <ligand>
        <name>5-methyltetrahydropteroyltri-L-glutamate</name>
        <dbReference type="ChEBI" id="CHEBI:58207"/>
    </ligand>
</feature>
<feature type="binding site" evidence="1">
    <location>
        <position position="565"/>
    </location>
    <ligand>
        <name>5-methyltetrahydropteroyltri-L-glutamate</name>
        <dbReference type="ChEBI" id="CHEBI:58207"/>
    </ligand>
</feature>
<feature type="binding site" evidence="1">
    <location>
        <position position="603"/>
    </location>
    <ligand>
        <name>L-homocysteine</name>
        <dbReference type="ChEBI" id="CHEBI:58199"/>
    </ligand>
</feature>
<feature type="binding site" evidence="1">
    <location>
        <position position="603"/>
    </location>
    <ligand>
        <name>L-methionine</name>
        <dbReference type="ChEBI" id="CHEBI:57844"/>
    </ligand>
</feature>
<feature type="binding site" evidence="1">
    <location>
        <position position="609"/>
    </location>
    <ligand>
        <name>5-methyltetrahydropteroyltri-L-glutamate</name>
        <dbReference type="ChEBI" id="CHEBI:58207"/>
    </ligand>
</feature>
<feature type="binding site" evidence="1">
    <location>
        <position position="645"/>
    </location>
    <ligand>
        <name>Zn(2+)</name>
        <dbReference type="ChEBI" id="CHEBI:29105"/>
        <note>catalytic</note>
    </ligand>
</feature>
<feature type="binding site" evidence="1">
    <location>
        <position position="647"/>
    </location>
    <ligand>
        <name>Zn(2+)</name>
        <dbReference type="ChEBI" id="CHEBI:29105"/>
        <note>catalytic</note>
    </ligand>
</feature>
<feature type="binding site" evidence="1">
    <location>
        <position position="669"/>
    </location>
    <ligand>
        <name>Zn(2+)</name>
        <dbReference type="ChEBI" id="CHEBI:29105"/>
        <note>catalytic</note>
    </ligand>
</feature>
<feature type="binding site" evidence="1">
    <location>
        <position position="730"/>
    </location>
    <ligand>
        <name>Zn(2+)</name>
        <dbReference type="ChEBI" id="CHEBI:29105"/>
        <note>catalytic</note>
    </ligand>
</feature>
<keyword id="KW-0028">Amino-acid biosynthesis</keyword>
<keyword id="KW-0479">Metal-binding</keyword>
<keyword id="KW-0486">Methionine biosynthesis</keyword>
<keyword id="KW-0489">Methyltransferase</keyword>
<keyword id="KW-0677">Repeat</keyword>
<keyword id="KW-0808">Transferase</keyword>
<keyword id="KW-0862">Zinc</keyword>
<protein>
    <recommendedName>
        <fullName evidence="1">5-methyltetrahydropteroyltriglutamate--homocysteine methyltransferase</fullName>
        <ecNumber evidence="1">2.1.1.14</ecNumber>
    </recommendedName>
    <alternativeName>
        <fullName evidence="1">Cobalamin-independent methionine synthase</fullName>
    </alternativeName>
    <alternativeName>
        <fullName evidence="1">Methionine synthase, vitamin-B12 independent isozyme</fullName>
    </alternativeName>
</protein>
<comment type="function">
    <text evidence="1">Catalyzes the transfer of a methyl group from 5-methyltetrahydrofolate to homocysteine resulting in methionine formation.</text>
</comment>
<comment type="catalytic activity">
    <reaction evidence="1">
        <text>5-methyltetrahydropteroyltri-L-glutamate + L-homocysteine = tetrahydropteroyltri-L-glutamate + L-methionine</text>
        <dbReference type="Rhea" id="RHEA:21196"/>
        <dbReference type="ChEBI" id="CHEBI:57844"/>
        <dbReference type="ChEBI" id="CHEBI:58140"/>
        <dbReference type="ChEBI" id="CHEBI:58199"/>
        <dbReference type="ChEBI" id="CHEBI:58207"/>
        <dbReference type="EC" id="2.1.1.14"/>
    </reaction>
</comment>
<comment type="cofactor">
    <cofactor evidence="1">
        <name>Zn(2+)</name>
        <dbReference type="ChEBI" id="CHEBI:29105"/>
    </cofactor>
    <text evidence="1">Binds 1 zinc ion per subunit.</text>
</comment>
<comment type="pathway">
    <text evidence="1">Amino-acid biosynthesis; L-methionine biosynthesis via de novo pathway; L-methionine from L-homocysteine (MetE route): step 1/1.</text>
</comment>
<comment type="similarity">
    <text evidence="1">Belongs to the vitamin-B12 independent methionine synthase family.</text>
</comment>
<gene>
    <name evidence="1" type="primary">metE</name>
    <name type="ordered locus">BMASAVP1_A2616</name>
</gene>
<evidence type="ECO:0000255" key="1">
    <source>
        <dbReference type="HAMAP-Rule" id="MF_00172"/>
    </source>
</evidence>
<proteinExistence type="inferred from homology"/>
<organism>
    <name type="scientific">Burkholderia mallei (strain SAVP1)</name>
    <dbReference type="NCBI Taxonomy" id="320388"/>
    <lineage>
        <taxon>Bacteria</taxon>
        <taxon>Pseudomonadati</taxon>
        <taxon>Pseudomonadota</taxon>
        <taxon>Betaproteobacteria</taxon>
        <taxon>Burkholderiales</taxon>
        <taxon>Burkholderiaceae</taxon>
        <taxon>Burkholderia</taxon>
        <taxon>pseudomallei group</taxon>
    </lineage>
</organism>
<sequence length="764" mass="84421">MTTAHILGFPRIGAQRELKFALERYWRDGASADAERALVDTGRALRAEHWRIERDAGLDCVTVGDFAWYDHVLTTLAHVGGLPRRFGFDARALTLADYFAAARGNAAQPAMEMTKWFDTNYHYLVPEYSPATTFGPGVEWLFDEVREARALGYRAKAALVGPLTLLWLGKARDGLVERLALLPRLVPAYRALLARLREAGVDWVQIDEPIFSLDLPDAWRDAARPTYEALAPGAPKLLVATYFDDASEHAALLKALPVAGLHVDLVRADAQLDAFVADYPADKVLSCGIVDGRNVWRNDLDRSLARLAPVRDALGERLWVATSCSLLHVPVDLAHEPRLDEELKTWLAFAAQKTREVAALRDALVKGRAAVAAEFDDAAVVAAARRTSARIHNPLVKRRVAALTDADARRASAYSVRAAAQRARFGLPLLPTTTIGSFPQTPEIRRARAAFKQGVLDHLGYLEAMREQVRIAIDKQLAYGLDVLVHGEAERNDMVEYFGELLWGFAITSNGWVQSYGSRCVKPPLVYGDVYLPEPMTVGWASYAQSLSAKPVKGMLTGPVTMLQWSFVRDDQPRATTALQIALALRQETLDLEKAGIGMIQIDEPALREGLPLKARERAAYLDWAVRAFGIAASGVADDTQIHTHMCYSEFGDILPSIAALDADVISIETTRSNMELLDAFETFDYPNEIGPGVYDIHSPRVPDADEIERLILLALERIPAQRLWVNPDCGLKTREWRQVDAALAAMVDAAKRVRQKVEEAAPA</sequence>
<accession>A1V6R3</accession>